<reference key="1">
    <citation type="journal article" date="2001" name="DNA Res.">
        <title>Complete genomic sequence of the filamentous nitrogen-fixing cyanobacterium Anabaena sp. strain PCC 7120.</title>
        <authorList>
            <person name="Kaneko T."/>
            <person name="Nakamura Y."/>
            <person name="Wolk C.P."/>
            <person name="Kuritz T."/>
            <person name="Sasamoto S."/>
            <person name="Watanabe A."/>
            <person name="Iriguchi M."/>
            <person name="Ishikawa A."/>
            <person name="Kawashima K."/>
            <person name="Kimura T."/>
            <person name="Kishida Y."/>
            <person name="Kohara M."/>
            <person name="Matsumoto M."/>
            <person name="Matsuno A."/>
            <person name="Muraki A."/>
            <person name="Nakazaki N."/>
            <person name="Shimpo S."/>
            <person name="Sugimoto M."/>
            <person name="Takazawa M."/>
            <person name="Yamada M."/>
            <person name="Yasuda M."/>
            <person name="Tabata S."/>
        </authorList>
    </citation>
    <scope>NUCLEOTIDE SEQUENCE [LARGE SCALE GENOMIC DNA]</scope>
    <source>
        <strain>PCC 7120 / SAG 25.82 / UTEX 2576</strain>
    </source>
</reference>
<keyword id="KW-0963">Cytoplasm</keyword>
<keyword id="KW-0274">FAD</keyword>
<keyword id="KW-0285">Flavoprotein</keyword>
<keyword id="KW-0547">Nucleotide-binding</keyword>
<keyword id="KW-0560">Oxidoreductase</keyword>
<keyword id="KW-0662">Pyridine nucleotide biosynthesis</keyword>
<keyword id="KW-1185">Reference proteome</keyword>
<comment type="function">
    <text evidence="1">Catalyzes the oxidation of L-aspartate to iminoaspartate, the first step in the de novo biosynthesis of NAD(+).</text>
</comment>
<comment type="catalytic activity">
    <reaction evidence="1">
        <text>L-aspartate + O2 = iminosuccinate + H2O2</text>
        <dbReference type="Rhea" id="RHEA:25876"/>
        <dbReference type="ChEBI" id="CHEBI:15379"/>
        <dbReference type="ChEBI" id="CHEBI:16240"/>
        <dbReference type="ChEBI" id="CHEBI:29991"/>
        <dbReference type="ChEBI" id="CHEBI:77875"/>
        <dbReference type="EC" id="1.4.3.16"/>
    </reaction>
    <physiologicalReaction direction="left-to-right" evidence="1">
        <dbReference type="Rhea" id="RHEA:25877"/>
    </physiologicalReaction>
</comment>
<comment type="cofactor">
    <cofactor evidence="1">
        <name>FAD</name>
        <dbReference type="ChEBI" id="CHEBI:57692"/>
    </cofactor>
    <text evidence="1">Binds 1 FAD per subunit.</text>
</comment>
<comment type="pathway">
    <text evidence="1">Cofactor biosynthesis; NAD(+) biosynthesis; iminoaspartate from L-aspartate (oxidase route): step 1/1.</text>
</comment>
<comment type="subcellular location">
    <subcellularLocation>
        <location evidence="1">Cytoplasm</location>
    </subcellularLocation>
</comment>
<comment type="similarity">
    <text evidence="2">Belongs to the FAD-dependent oxidoreductase 2 family. NadB subfamily.</text>
</comment>
<accession>Q8YXJ6</accession>
<sequence>MITHYSLPITRYPLPRFLTLSQIEFPSQFDVLVVGAGAAGLYTALCLPESLRVGLITKETVALSASDWAQGGIAAAIAPNDSPSLHIEDTIQAGAGLCDVAAVEFLAQQAPKCIESLVNLGVAFDRHGQALALTLEAAHSRNRVLHAADTTGREVTTTLTDQVLRRPNIQVIQQALALSLWLEPETGHCQGISLFYQGAITWVRAGAVVLATGGGGQVFAQTTNPAVSTGDGVAIAWRAGAILRDLEFVQFHPTALTKPGADRFLISEAVRGEGAHLVDNEGRRFAFDYHPAGELAPRDVVSRAIFSHLQRTAVDPATAHVWLDMRPIPEDKIRLRFPNIVKVCQRWGIDVFREPIPVAPAAHYWMGGIATNLKNQTNIPGLYAVGETASTGVHGANRLASNSLLECIVFGAQLANLTPADLIQHTETPALPTREFKIDASEWQHQQSQLAILREKLPRLVWQSAGICREQSTLSVAIATVKSWQQDFAALPLSQFLLSLQPNEPVSCNFSDTDQQLRLWAETGNLLDVAYLILKSAAFRIESRGGHFRLDYPHSNPDWQVHSLVQKHQWWQSPIMKS</sequence>
<evidence type="ECO:0000250" key="1">
    <source>
        <dbReference type="UniProtKB" id="P10902"/>
    </source>
</evidence>
<evidence type="ECO:0000305" key="2"/>
<organism>
    <name type="scientific">Nostoc sp. (strain PCC 7120 / SAG 25.82 / UTEX 2576)</name>
    <dbReference type="NCBI Taxonomy" id="103690"/>
    <lineage>
        <taxon>Bacteria</taxon>
        <taxon>Bacillati</taxon>
        <taxon>Cyanobacteriota</taxon>
        <taxon>Cyanophyceae</taxon>
        <taxon>Nostocales</taxon>
        <taxon>Nostocaceae</taxon>
        <taxon>Nostoc</taxon>
    </lineage>
</organism>
<proteinExistence type="inferred from homology"/>
<dbReference type="EC" id="1.4.3.16" evidence="1"/>
<dbReference type="EMBL" id="BA000019">
    <property type="protein sequence ID" value="BAB73174.1"/>
    <property type="molecule type" value="Genomic_DNA"/>
</dbReference>
<dbReference type="PIR" id="AF1958">
    <property type="entry name" value="AF1958"/>
</dbReference>
<dbReference type="SMR" id="Q8YXJ6"/>
<dbReference type="STRING" id="103690.gene:10493231"/>
<dbReference type="KEGG" id="ana:alr1217"/>
<dbReference type="eggNOG" id="COG0029">
    <property type="taxonomic scope" value="Bacteria"/>
</dbReference>
<dbReference type="UniPathway" id="UPA00253">
    <property type="reaction ID" value="UER00326"/>
</dbReference>
<dbReference type="Proteomes" id="UP000002483">
    <property type="component" value="Chromosome"/>
</dbReference>
<dbReference type="GO" id="GO:0005737">
    <property type="term" value="C:cytoplasm"/>
    <property type="evidence" value="ECO:0007669"/>
    <property type="project" value="UniProtKB-SubCell"/>
</dbReference>
<dbReference type="GO" id="GO:0008734">
    <property type="term" value="F:L-aspartate oxidase activity"/>
    <property type="evidence" value="ECO:0007669"/>
    <property type="project" value="UniProtKB-EC"/>
</dbReference>
<dbReference type="GO" id="GO:0000166">
    <property type="term" value="F:nucleotide binding"/>
    <property type="evidence" value="ECO:0007669"/>
    <property type="project" value="UniProtKB-KW"/>
</dbReference>
<dbReference type="GO" id="GO:0033765">
    <property type="term" value="F:steroid dehydrogenase activity, acting on the CH-CH group of donors"/>
    <property type="evidence" value="ECO:0007669"/>
    <property type="project" value="UniProtKB-ARBA"/>
</dbReference>
<dbReference type="GO" id="GO:0034628">
    <property type="term" value="P:'de novo' NAD biosynthetic process from L-aspartate"/>
    <property type="evidence" value="ECO:0007669"/>
    <property type="project" value="TreeGrafter"/>
</dbReference>
<dbReference type="FunFam" id="3.90.700.10:FF:000002">
    <property type="entry name" value="L-aspartate oxidase"/>
    <property type="match status" value="1"/>
</dbReference>
<dbReference type="Gene3D" id="3.50.50.60">
    <property type="entry name" value="FAD/NAD(P)-binding domain"/>
    <property type="match status" value="1"/>
</dbReference>
<dbReference type="Gene3D" id="1.20.58.100">
    <property type="entry name" value="Fumarate reductase/succinate dehydrogenase flavoprotein-like, C-terminal domain"/>
    <property type="match status" value="1"/>
</dbReference>
<dbReference type="Gene3D" id="3.90.700.10">
    <property type="entry name" value="Succinate dehydrogenase/fumarate reductase flavoprotein, catalytic domain"/>
    <property type="match status" value="1"/>
</dbReference>
<dbReference type="InterPro" id="IPR003953">
    <property type="entry name" value="FAD-dep_OxRdtase_2_FAD-bd"/>
</dbReference>
<dbReference type="InterPro" id="IPR036188">
    <property type="entry name" value="FAD/NAD-bd_sf"/>
</dbReference>
<dbReference type="InterPro" id="IPR037099">
    <property type="entry name" value="Fum_R/Succ_DH_flav-like_C_sf"/>
</dbReference>
<dbReference type="InterPro" id="IPR015939">
    <property type="entry name" value="Fum_Rdtase/Succ_DH_flav-like_C"/>
</dbReference>
<dbReference type="InterPro" id="IPR005288">
    <property type="entry name" value="NadB"/>
</dbReference>
<dbReference type="InterPro" id="IPR027477">
    <property type="entry name" value="Succ_DH/fumarate_Rdtase_cat_sf"/>
</dbReference>
<dbReference type="NCBIfam" id="TIGR00551">
    <property type="entry name" value="nadB"/>
    <property type="match status" value="1"/>
</dbReference>
<dbReference type="NCBIfam" id="NF005636">
    <property type="entry name" value="PRK07395.1"/>
    <property type="match status" value="1"/>
</dbReference>
<dbReference type="PANTHER" id="PTHR42716">
    <property type="entry name" value="L-ASPARTATE OXIDASE"/>
    <property type="match status" value="1"/>
</dbReference>
<dbReference type="PANTHER" id="PTHR42716:SF2">
    <property type="entry name" value="L-ASPARTATE OXIDASE, CHLOROPLASTIC"/>
    <property type="match status" value="1"/>
</dbReference>
<dbReference type="Pfam" id="PF00890">
    <property type="entry name" value="FAD_binding_2"/>
    <property type="match status" value="1"/>
</dbReference>
<dbReference type="Pfam" id="PF02910">
    <property type="entry name" value="Succ_DH_flav_C"/>
    <property type="match status" value="1"/>
</dbReference>
<dbReference type="PRINTS" id="PR00368">
    <property type="entry name" value="FADPNR"/>
</dbReference>
<dbReference type="SUPFAM" id="SSF51905">
    <property type="entry name" value="FAD/NAD(P)-binding domain"/>
    <property type="match status" value="1"/>
</dbReference>
<dbReference type="SUPFAM" id="SSF46977">
    <property type="entry name" value="Succinate dehydrogenase/fumarate reductase flavoprotein C-terminal domain"/>
    <property type="match status" value="1"/>
</dbReference>
<dbReference type="SUPFAM" id="SSF56425">
    <property type="entry name" value="Succinate dehydrogenase/fumarate reductase flavoprotein, catalytic domain"/>
    <property type="match status" value="1"/>
</dbReference>
<protein>
    <recommendedName>
        <fullName evidence="1">L-aspartate oxidase</fullName>
        <shortName evidence="1">LASPO</shortName>
        <ecNumber evidence="1">1.4.3.16</ecNumber>
    </recommendedName>
    <alternativeName>
        <fullName>Quinolinate synthase B</fullName>
    </alternativeName>
</protein>
<name>NADB_NOSS1</name>
<feature type="chain" id="PRO_0000184377" description="L-aspartate oxidase">
    <location>
        <begin position="1"/>
        <end position="578"/>
    </location>
</feature>
<feature type="active site" description="Proton donor/acceptor" evidence="1">
    <location>
        <position position="298"/>
    </location>
</feature>
<feature type="binding site" evidence="1">
    <location>
        <begin position="36"/>
        <end position="39"/>
    </location>
    <ligand>
        <name>FAD</name>
        <dbReference type="ChEBI" id="CHEBI:57692"/>
    </ligand>
</feature>
<feature type="binding site" evidence="1">
    <location>
        <position position="58"/>
    </location>
    <ligand>
        <name>FAD</name>
        <dbReference type="ChEBI" id="CHEBI:57692"/>
    </ligand>
</feature>
<feature type="binding site" evidence="1">
    <location>
        <begin position="65"/>
        <end position="72"/>
    </location>
    <ligand>
        <name>FAD</name>
        <dbReference type="ChEBI" id="CHEBI:57692"/>
    </ligand>
</feature>
<feature type="binding site" evidence="1">
    <location>
        <position position="231"/>
    </location>
    <ligand>
        <name>FAD</name>
        <dbReference type="ChEBI" id="CHEBI:57692"/>
    </ligand>
</feature>
<feature type="binding site" evidence="1">
    <location>
        <position position="387"/>
    </location>
    <ligand>
        <name>FAD</name>
        <dbReference type="ChEBI" id="CHEBI:57692"/>
    </ligand>
</feature>
<feature type="binding site" evidence="1">
    <location>
        <begin position="403"/>
        <end position="404"/>
    </location>
    <ligand>
        <name>FAD</name>
        <dbReference type="ChEBI" id="CHEBI:57692"/>
    </ligand>
</feature>
<feature type="site" description="Important in orienting the L-aspartate substrate" evidence="1">
    <location>
        <position position="136"/>
    </location>
</feature>
<gene>
    <name type="primary">nadB</name>
    <name type="ordered locus">alr1217</name>
</gene>